<reference key="1">
    <citation type="patent" date="2003-11-11" number="JP2003533178">
        <title>O-superfamily conotoxin peptides.</title>
        <authorList>
            <person name="Hillyard D.R."/>
            <person name="Mcintosh M.J."/>
            <person name="Jones R.M."/>
            <person name="Cartier E.G."/>
            <person name="Watkins M."/>
            <person name="Olivera B.M."/>
            <person name="Layer R.T."/>
        </authorList>
    </citation>
    <scope>NUCLEOTIDE SEQUENCE</scope>
</reference>
<reference key="2">
    <citation type="journal article" date="2001" name="Biochemistry">
        <title>Delta-conotoxin structure/function through a cladistic analysis.</title>
        <authorList>
            <person name="Bulaj G."/>
            <person name="DeLaCruz R."/>
            <person name="Azimi-Zonooz A."/>
            <person name="West P."/>
            <person name="Watkins M."/>
            <person name="Yoshikami D."/>
            <person name="Olivera B.M."/>
        </authorList>
    </citation>
    <scope>NUCLEOTIDE SEQUENCE [MRNA] OF 52-78</scope>
    <source>
        <tissue>Venom duct</tissue>
    </source>
</reference>
<sequence>MKLTCMMIVAVLFLTAWTFVTADDSRNGLKNLFPKARHEMKNPEASKLNKRYGCSNAGAFCGIHPGLCCSELCLVWCT</sequence>
<evidence type="ECO:0000250" key="1"/>
<evidence type="ECO:0000255" key="2"/>
<evidence type="ECO:0000305" key="3"/>
<protein>
    <recommendedName>
        <fullName>Delta-conotoxin-like CVIE</fullName>
        <shortName>Delta-CVIE</shortName>
    </recommendedName>
</protein>
<proteinExistence type="evidence at transcript level"/>
<dbReference type="EMBL" id="DJ379442">
    <property type="status" value="NOT_ANNOTATED_CDS"/>
    <property type="molecule type" value="Unassigned_DNA"/>
</dbReference>
<dbReference type="ConoServer" id="1625">
    <property type="toxin name" value="CVIE-2"/>
</dbReference>
<dbReference type="GO" id="GO:0005576">
    <property type="term" value="C:extracellular region"/>
    <property type="evidence" value="ECO:0007669"/>
    <property type="project" value="UniProtKB-SubCell"/>
</dbReference>
<dbReference type="GO" id="GO:0044231">
    <property type="term" value="C:host cell presynaptic membrane"/>
    <property type="evidence" value="ECO:0007669"/>
    <property type="project" value="UniProtKB-KW"/>
</dbReference>
<dbReference type="GO" id="GO:0019871">
    <property type="term" value="F:sodium channel inhibitor activity"/>
    <property type="evidence" value="ECO:0007669"/>
    <property type="project" value="InterPro"/>
</dbReference>
<dbReference type="GO" id="GO:0090729">
    <property type="term" value="F:toxin activity"/>
    <property type="evidence" value="ECO:0007669"/>
    <property type="project" value="UniProtKB-KW"/>
</dbReference>
<dbReference type="InterPro" id="IPR004214">
    <property type="entry name" value="Conotoxin"/>
</dbReference>
<dbReference type="InterPro" id="IPR012322">
    <property type="entry name" value="Conotoxin_d-typ_CS"/>
</dbReference>
<dbReference type="Pfam" id="PF02950">
    <property type="entry name" value="Conotoxin"/>
    <property type="match status" value="1"/>
</dbReference>
<dbReference type="PROSITE" id="PS60005">
    <property type="entry name" value="DELTA_CONOTOXIN"/>
    <property type="match status" value="1"/>
</dbReference>
<feature type="signal peptide" evidence="2">
    <location>
        <begin position="1"/>
        <end position="22"/>
    </location>
</feature>
<feature type="propeptide" id="PRO_0000392698" evidence="1">
    <location>
        <begin position="23"/>
        <end position="49"/>
    </location>
</feature>
<feature type="peptide" id="PRO_0000044470" description="Delta-conotoxin-like CVIE">
    <location>
        <begin position="52"/>
        <end position="78"/>
    </location>
</feature>
<feature type="modified residue" description="4-hydroxyproline" evidence="1">
    <location>
        <position position="65"/>
    </location>
</feature>
<feature type="disulfide bond" evidence="1">
    <location>
        <begin position="54"/>
        <end position="69"/>
    </location>
</feature>
<feature type="disulfide bond" evidence="1">
    <location>
        <begin position="61"/>
        <end position="73"/>
    </location>
</feature>
<feature type="disulfide bond" evidence="1">
    <location>
        <begin position="68"/>
        <end position="77"/>
    </location>
</feature>
<name>O16DE_CONCT</name>
<comment type="function">
    <text evidence="1">Delta-conotoxins bind to site 6 of voltage-gated sodium channels (Nav) and inhibit the inactivation process.</text>
</comment>
<comment type="subcellular location">
    <subcellularLocation>
        <location evidence="1">Secreted</location>
    </subcellularLocation>
</comment>
<comment type="tissue specificity">
    <text>Expressed by the venom duct.</text>
</comment>
<comment type="domain">
    <text evidence="1">The presence of a 'disulfide through disulfide knot' structurally defines this protein as a knottin.</text>
</comment>
<comment type="domain">
    <text>The cysteine framework is VI/VII (C-C-CC-C-C).</text>
</comment>
<comment type="similarity">
    <text evidence="3">Belongs to the conotoxin O1 superfamily.</text>
</comment>
<organism>
    <name type="scientific">Conus catus</name>
    <name type="common">Cat cone</name>
    <dbReference type="NCBI Taxonomy" id="101291"/>
    <lineage>
        <taxon>Eukaryota</taxon>
        <taxon>Metazoa</taxon>
        <taxon>Spiralia</taxon>
        <taxon>Lophotrochozoa</taxon>
        <taxon>Mollusca</taxon>
        <taxon>Gastropoda</taxon>
        <taxon>Caenogastropoda</taxon>
        <taxon>Neogastropoda</taxon>
        <taxon>Conoidea</taxon>
        <taxon>Conidae</taxon>
        <taxon>Conus</taxon>
        <taxon>Pionoconus</taxon>
    </lineage>
</organism>
<keyword id="KW-0165">Cleavage on pair of basic residues</keyword>
<keyword id="KW-1015">Disulfide bond</keyword>
<keyword id="KW-0379">Hydroxylation</keyword>
<keyword id="KW-0872">Ion channel impairing toxin</keyword>
<keyword id="KW-0960">Knottin</keyword>
<keyword id="KW-0528">Neurotoxin</keyword>
<keyword id="KW-0638">Presynaptic neurotoxin</keyword>
<keyword id="KW-0964">Secreted</keyword>
<keyword id="KW-0732">Signal</keyword>
<keyword id="KW-0800">Toxin</keyword>
<keyword id="KW-0738">Voltage-gated sodium channel impairing toxin</keyword>
<accession>P69751</accession>